<proteinExistence type="inferred from homology"/>
<organism>
    <name type="scientific">Rickettsia felis (strain ATCC VR-1525 / URRWXCal2)</name>
    <name type="common">Rickettsia azadi</name>
    <dbReference type="NCBI Taxonomy" id="315456"/>
    <lineage>
        <taxon>Bacteria</taxon>
        <taxon>Pseudomonadati</taxon>
        <taxon>Pseudomonadota</taxon>
        <taxon>Alphaproteobacteria</taxon>
        <taxon>Rickettsiales</taxon>
        <taxon>Rickettsiaceae</taxon>
        <taxon>Rickettsieae</taxon>
        <taxon>Rickettsia</taxon>
        <taxon>spotted fever group</taxon>
    </lineage>
</organism>
<comment type="function">
    <text evidence="1">DNA repair enzyme that has both DNA N-glycosylase activity and AP-lyase activity. The DNA N-glycosylase activity releases various damaged pyrimidines from DNA by cleaving the N-glycosidic bond, leaving an AP (apurinic/apyrimidinic) site. The AP-lyase activity cleaves the phosphodiester bond 3' to the AP site by a beta-elimination, leaving a 3'-terminal unsaturated sugar and a product with a terminal 5'-phosphate.</text>
</comment>
<comment type="catalytic activity">
    <reaction evidence="1">
        <text>2'-deoxyribonucleotide-(2'-deoxyribose 5'-phosphate)-2'-deoxyribonucleotide-DNA = a 3'-end 2'-deoxyribonucleotide-(2,3-dehydro-2,3-deoxyribose 5'-phosphate)-DNA + a 5'-end 5'-phospho-2'-deoxyribonucleoside-DNA + H(+)</text>
        <dbReference type="Rhea" id="RHEA:66592"/>
        <dbReference type="Rhea" id="RHEA-COMP:13180"/>
        <dbReference type="Rhea" id="RHEA-COMP:16897"/>
        <dbReference type="Rhea" id="RHEA-COMP:17067"/>
        <dbReference type="ChEBI" id="CHEBI:15378"/>
        <dbReference type="ChEBI" id="CHEBI:136412"/>
        <dbReference type="ChEBI" id="CHEBI:157695"/>
        <dbReference type="ChEBI" id="CHEBI:167181"/>
        <dbReference type="EC" id="4.2.99.18"/>
    </reaction>
</comment>
<comment type="cofactor">
    <cofactor evidence="1">
        <name>[4Fe-4S] cluster</name>
        <dbReference type="ChEBI" id="CHEBI:49883"/>
    </cofactor>
    <text evidence="1">Binds 1 [4Fe-4S] cluster.</text>
</comment>
<comment type="similarity">
    <text evidence="1">Belongs to the Nth/MutY family.</text>
</comment>
<accession>Q4UK93</accession>
<evidence type="ECO:0000255" key="1">
    <source>
        <dbReference type="HAMAP-Rule" id="MF_00942"/>
    </source>
</evidence>
<reference key="1">
    <citation type="journal article" date="2005" name="PLoS Biol.">
        <title>The genome sequence of Rickettsia felis identifies the first putative conjugative plasmid in an obligate intracellular parasite.</title>
        <authorList>
            <person name="Ogata H."/>
            <person name="Renesto P."/>
            <person name="Audic S."/>
            <person name="Robert C."/>
            <person name="Blanc G."/>
            <person name="Fournier P.-E."/>
            <person name="Parinello H."/>
            <person name="Claverie J.-M."/>
            <person name="Raoult D."/>
        </authorList>
    </citation>
    <scope>NUCLEOTIDE SEQUENCE [LARGE SCALE GENOMIC DNA]</scope>
    <source>
        <strain>ATCC VR-1525 / URRWXCal2</strain>
    </source>
</reference>
<sequence>MQAQIVNKIFEIFSKNNPSPKTELIYKNDFTLLVAVMLSAQATDISVNLATKSLFETYDTTEKILELGEDGLKKYIKSIGLFNSKAKNIIALCKILISNYQSSVPNDFKELIKLPGVGRKTANVVLNCLFGMPTMAVDTHVFRVAKRIGLARGNSPEIVEKELLQIINEKWLTHAHHWLILHGRYICKARKPDCDICPIKEYCEYYNSPIISK</sequence>
<dbReference type="EC" id="4.2.99.18" evidence="1"/>
<dbReference type="EMBL" id="CP000053">
    <property type="protein sequence ID" value="AAY62042.1"/>
    <property type="molecule type" value="Genomic_DNA"/>
</dbReference>
<dbReference type="SMR" id="Q4UK93"/>
<dbReference type="STRING" id="315456.RF_1191"/>
<dbReference type="KEGG" id="rfe:RF_1191"/>
<dbReference type="eggNOG" id="COG0177">
    <property type="taxonomic scope" value="Bacteria"/>
</dbReference>
<dbReference type="HOGENOM" id="CLU_012862_3_3_5"/>
<dbReference type="OrthoDB" id="9800977at2"/>
<dbReference type="Proteomes" id="UP000008548">
    <property type="component" value="Chromosome"/>
</dbReference>
<dbReference type="GO" id="GO:0051539">
    <property type="term" value="F:4 iron, 4 sulfur cluster binding"/>
    <property type="evidence" value="ECO:0007669"/>
    <property type="project" value="UniProtKB-UniRule"/>
</dbReference>
<dbReference type="GO" id="GO:0140078">
    <property type="term" value="F:class I DNA-(apurinic or apyrimidinic site) endonuclease activity"/>
    <property type="evidence" value="ECO:0007669"/>
    <property type="project" value="UniProtKB-EC"/>
</dbReference>
<dbReference type="GO" id="GO:0003677">
    <property type="term" value="F:DNA binding"/>
    <property type="evidence" value="ECO:0007669"/>
    <property type="project" value="UniProtKB-UniRule"/>
</dbReference>
<dbReference type="GO" id="GO:0019104">
    <property type="term" value="F:DNA N-glycosylase activity"/>
    <property type="evidence" value="ECO:0007669"/>
    <property type="project" value="UniProtKB-UniRule"/>
</dbReference>
<dbReference type="GO" id="GO:0046872">
    <property type="term" value="F:metal ion binding"/>
    <property type="evidence" value="ECO:0007669"/>
    <property type="project" value="UniProtKB-KW"/>
</dbReference>
<dbReference type="GO" id="GO:0006285">
    <property type="term" value="P:base-excision repair, AP site formation"/>
    <property type="evidence" value="ECO:0007669"/>
    <property type="project" value="TreeGrafter"/>
</dbReference>
<dbReference type="CDD" id="cd00056">
    <property type="entry name" value="ENDO3c"/>
    <property type="match status" value="1"/>
</dbReference>
<dbReference type="FunFam" id="1.10.1670.10:FF:000001">
    <property type="entry name" value="Endonuclease III"/>
    <property type="match status" value="1"/>
</dbReference>
<dbReference type="FunFam" id="1.10.340.30:FF:000001">
    <property type="entry name" value="Endonuclease III"/>
    <property type="match status" value="1"/>
</dbReference>
<dbReference type="Gene3D" id="1.10.1670.10">
    <property type="entry name" value="Helix-hairpin-Helix base-excision DNA repair enzymes (C-terminal)"/>
    <property type="match status" value="1"/>
</dbReference>
<dbReference type="Gene3D" id="1.10.340.30">
    <property type="entry name" value="Hypothetical protein, domain 2"/>
    <property type="match status" value="1"/>
</dbReference>
<dbReference type="HAMAP" id="MF_00942">
    <property type="entry name" value="Nth"/>
    <property type="match status" value="1"/>
</dbReference>
<dbReference type="InterPro" id="IPR011257">
    <property type="entry name" value="DNA_glycosylase"/>
</dbReference>
<dbReference type="InterPro" id="IPR004036">
    <property type="entry name" value="Endonuclease-III-like_CS2"/>
</dbReference>
<dbReference type="InterPro" id="IPR003651">
    <property type="entry name" value="Endonuclease3_FeS-loop_motif"/>
</dbReference>
<dbReference type="InterPro" id="IPR003265">
    <property type="entry name" value="HhH-GPD_domain"/>
</dbReference>
<dbReference type="InterPro" id="IPR023170">
    <property type="entry name" value="HhH_base_excis_C"/>
</dbReference>
<dbReference type="InterPro" id="IPR000445">
    <property type="entry name" value="HhH_motif"/>
</dbReference>
<dbReference type="InterPro" id="IPR005759">
    <property type="entry name" value="Nth"/>
</dbReference>
<dbReference type="NCBIfam" id="TIGR01083">
    <property type="entry name" value="nth"/>
    <property type="match status" value="1"/>
</dbReference>
<dbReference type="PANTHER" id="PTHR10359">
    <property type="entry name" value="A/G-SPECIFIC ADENINE GLYCOSYLASE/ENDONUCLEASE III"/>
    <property type="match status" value="1"/>
</dbReference>
<dbReference type="PANTHER" id="PTHR10359:SF18">
    <property type="entry name" value="ENDONUCLEASE III"/>
    <property type="match status" value="1"/>
</dbReference>
<dbReference type="Pfam" id="PF10576">
    <property type="entry name" value="EndIII_4Fe-2S"/>
    <property type="match status" value="1"/>
</dbReference>
<dbReference type="Pfam" id="PF00633">
    <property type="entry name" value="HHH"/>
    <property type="match status" value="1"/>
</dbReference>
<dbReference type="Pfam" id="PF00730">
    <property type="entry name" value="HhH-GPD"/>
    <property type="match status" value="1"/>
</dbReference>
<dbReference type="PIRSF" id="PIRSF001435">
    <property type="entry name" value="Nth"/>
    <property type="match status" value="1"/>
</dbReference>
<dbReference type="SMART" id="SM00478">
    <property type="entry name" value="ENDO3c"/>
    <property type="match status" value="1"/>
</dbReference>
<dbReference type="SMART" id="SM00525">
    <property type="entry name" value="FES"/>
    <property type="match status" value="1"/>
</dbReference>
<dbReference type="SUPFAM" id="SSF48150">
    <property type="entry name" value="DNA-glycosylase"/>
    <property type="match status" value="1"/>
</dbReference>
<dbReference type="PROSITE" id="PS01155">
    <property type="entry name" value="ENDONUCLEASE_III_2"/>
    <property type="match status" value="1"/>
</dbReference>
<name>END3_RICFE</name>
<protein>
    <recommendedName>
        <fullName evidence="1">Endonuclease III</fullName>
        <ecNumber evidence="1">4.2.99.18</ecNumber>
    </recommendedName>
    <alternativeName>
        <fullName evidence="1">DNA-(apurinic or apyrimidinic site) lyase</fullName>
    </alternativeName>
</protein>
<keyword id="KW-0004">4Fe-4S</keyword>
<keyword id="KW-0227">DNA damage</keyword>
<keyword id="KW-0234">DNA repair</keyword>
<keyword id="KW-0238">DNA-binding</keyword>
<keyword id="KW-0326">Glycosidase</keyword>
<keyword id="KW-0378">Hydrolase</keyword>
<keyword id="KW-0408">Iron</keyword>
<keyword id="KW-0411">Iron-sulfur</keyword>
<keyword id="KW-0456">Lyase</keyword>
<keyword id="KW-0479">Metal-binding</keyword>
<gene>
    <name evidence="1" type="primary">nth</name>
    <name type="ordered locus">RF_1191</name>
</gene>
<feature type="chain" id="PRO_0000280932" description="Endonuclease III">
    <location>
        <begin position="1"/>
        <end position="213"/>
    </location>
</feature>
<feature type="domain" description="HhH" evidence="1">
    <location>
        <begin position="108"/>
        <end position="127"/>
    </location>
</feature>
<feature type="binding site" evidence="1">
    <location>
        <position position="187"/>
    </location>
    <ligand>
        <name>[4Fe-4S] cluster</name>
        <dbReference type="ChEBI" id="CHEBI:49883"/>
    </ligand>
</feature>
<feature type="binding site" evidence="1">
    <location>
        <position position="194"/>
    </location>
    <ligand>
        <name>[4Fe-4S] cluster</name>
        <dbReference type="ChEBI" id="CHEBI:49883"/>
    </ligand>
</feature>
<feature type="binding site" evidence="1">
    <location>
        <position position="197"/>
    </location>
    <ligand>
        <name>[4Fe-4S] cluster</name>
        <dbReference type="ChEBI" id="CHEBI:49883"/>
    </ligand>
</feature>
<feature type="binding site" evidence="1">
    <location>
        <position position="203"/>
    </location>
    <ligand>
        <name>[4Fe-4S] cluster</name>
        <dbReference type="ChEBI" id="CHEBI:49883"/>
    </ligand>
</feature>